<proteinExistence type="evidence at protein level"/>
<keyword id="KW-0002">3D-structure</keyword>
<keyword id="KW-0067">ATP-binding</keyword>
<keyword id="KW-0963">Cytoplasm</keyword>
<keyword id="KW-0206">Cytoskeleton</keyword>
<keyword id="KW-0547">Nucleotide-binding</keyword>
<keyword id="KW-0539">Nucleus</keyword>
<keyword id="KW-0597">Phosphoprotein</keyword>
<keyword id="KW-1185">Reference proteome</keyword>
<keyword id="KW-0804">Transcription</keyword>
<keyword id="KW-0805">Transcription regulation</keyword>
<sequence length="881" mass="100209">MSQEEAESSIIYEEPIDIPLEDDDDEDELEEENSVPLSSQADQENAENESDDSVDNVVGSETPRSVTGLSVDPRDVADEEDEDEEGEDEDEDEDDNDVDNEDENDNDNANENENELGSSRDKRAPPAVQTSKRYKKYPKLDPAKAPPGKKVPLHLLEKRRLGRIKAAEEFAKTLKKIGIEKVETTTLPATGLFQPLMLINQKNYSSDYLKKDDQIFALRDRKFLRNNNTSQISSTNTPDVIDLKSLPHSEASAAPLNDEIDLNDPTATIVIHPGSNSIKIGFPKDDHPVVVPNCVAVPKKWLDLENSEHVENVCLQREQSEEFNNIKSEMEKNFRERMRYYKRKVPGNAHEQVVSFNENSKPEIISEKNDPSPIEWIFDDSKLYYGSDALRCVDEKFVIRKPFRGGSFNVKSPYYKSLAELISDVTKLLEHALNSETLNVKPTKFNQYKVVLVIPDIFKKSHVETFIRVLLTELQFQAVAIIQESLATCYGAGISTSTCVVNIGAAETRIACVDEGTVLEHSAITLDYGGDDITRLFALFLLQSDFPLQDWKIDSKHGWLLAERLKKNFTTFQDADVAVQLYNFMNRSPNQPTEKYEFKLFDEVMLAPLALFFPQIFKLIRTSSHKNSSLEFQLPESRDLFTNELNDWNSLSQFESKEGNLYCDLNDDLKILNRILDAHNIIDQLQDKPENYGNTLKENFAPLEKAIVQSIANASITADVTRMNSFYSNILIVGGSSKIPALDFILTDRINIWRPSLLSSASFPQFYKKLTKEIKDLEGHYVNAPDKTEDENKQILQAQIKEKIVEELEEQHQNIEHQNGNEHIFPVSIIPPPRDMNPALIIWKGASVLAQIKLVEELFITNSDWDVHGSRILQYKCIFTY</sequence>
<protein>
    <recommendedName>
        <fullName>Actin-like protein ARP8</fullName>
    </recommendedName>
</protein>
<feature type="chain" id="PRO_0000089128" description="Actin-like protein ARP8">
    <location>
        <begin position="1"/>
        <end position="881"/>
    </location>
</feature>
<feature type="region of interest" description="Disordered" evidence="2">
    <location>
        <begin position="1"/>
        <end position="150"/>
    </location>
</feature>
<feature type="compositionally biased region" description="Acidic residues" evidence="2">
    <location>
        <begin position="14"/>
        <end position="33"/>
    </location>
</feature>
<feature type="compositionally biased region" description="Acidic residues" evidence="2">
    <location>
        <begin position="44"/>
        <end position="54"/>
    </location>
</feature>
<feature type="compositionally biased region" description="Acidic residues" evidence="2">
    <location>
        <begin position="77"/>
        <end position="114"/>
    </location>
</feature>
<feature type="binding site" evidence="1">
    <location>
        <begin position="502"/>
        <end position="505"/>
    </location>
    <ligand>
        <name>ATP</name>
        <dbReference type="ChEBI" id="CHEBI:30616"/>
    </ligand>
</feature>
<feature type="modified residue" description="Phosphoserine" evidence="6 7 8">
    <location>
        <position position="65"/>
    </location>
</feature>
<feature type="modified residue" description="Phosphoserine" evidence="7">
    <location>
        <position position="70"/>
    </location>
</feature>
<feature type="helix" evidence="11">
    <location>
        <begin position="167"/>
        <end position="177"/>
    </location>
</feature>
<feature type="turn" evidence="11">
    <location>
        <begin position="189"/>
        <end position="192"/>
    </location>
</feature>
<feature type="turn" evidence="11">
    <location>
        <begin position="212"/>
        <end position="214"/>
    </location>
</feature>
<feature type="helix" evidence="11">
    <location>
        <begin position="216"/>
        <end position="227"/>
    </location>
</feature>
<feature type="helix" evidence="9">
    <location>
        <begin position="265"/>
        <end position="267"/>
    </location>
</feature>
<feature type="strand" evidence="9">
    <location>
        <begin position="268"/>
        <end position="272"/>
    </location>
</feature>
<feature type="strand" evidence="9">
    <location>
        <begin position="275"/>
        <end position="281"/>
    </location>
</feature>
<feature type="strand" evidence="9">
    <location>
        <begin position="285"/>
        <end position="287"/>
    </location>
</feature>
<feature type="strand" evidence="9">
    <location>
        <begin position="289"/>
        <end position="293"/>
    </location>
</feature>
<feature type="strand" evidence="9">
    <location>
        <begin position="295"/>
        <end position="298"/>
    </location>
</feature>
<feature type="helix" evidence="9">
    <location>
        <begin position="299"/>
        <end position="301"/>
    </location>
</feature>
<feature type="strand" evidence="9">
    <location>
        <begin position="305"/>
        <end position="307"/>
    </location>
</feature>
<feature type="helix" evidence="9">
    <location>
        <begin position="321"/>
        <end position="341"/>
    </location>
</feature>
<feature type="helix" evidence="10">
    <location>
        <begin position="352"/>
        <end position="354"/>
    </location>
</feature>
<feature type="strand" evidence="9">
    <location>
        <begin position="357"/>
        <end position="360"/>
    </location>
</feature>
<feature type="strand" evidence="12">
    <location>
        <begin position="363"/>
        <end position="365"/>
    </location>
</feature>
<feature type="strand" evidence="9">
    <location>
        <begin position="367"/>
        <end position="370"/>
    </location>
</feature>
<feature type="helix" evidence="9">
    <location>
        <begin position="386"/>
        <end position="390"/>
    </location>
</feature>
<feature type="turn" evidence="9">
    <location>
        <begin position="394"/>
        <end position="396"/>
    </location>
</feature>
<feature type="strand" evidence="9">
    <location>
        <begin position="397"/>
        <end position="400"/>
    </location>
</feature>
<feature type="strand" evidence="9">
    <location>
        <begin position="402"/>
        <end position="404"/>
    </location>
</feature>
<feature type="helix" evidence="9">
    <location>
        <begin position="418"/>
        <end position="433"/>
    </location>
</feature>
<feature type="strand" evidence="9">
    <location>
        <begin position="434"/>
        <end position="437"/>
    </location>
</feature>
<feature type="helix" evidence="9">
    <location>
        <begin position="442"/>
        <end position="447"/>
    </location>
</feature>
<feature type="strand" evidence="9">
    <location>
        <begin position="449"/>
        <end position="454"/>
    </location>
</feature>
<feature type="helix" evidence="9">
    <location>
        <begin position="460"/>
        <end position="472"/>
    </location>
</feature>
<feature type="strand" evidence="9">
    <location>
        <begin position="477"/>
        <end position="483"/>
    </location>
</feature>
<feature type="helix" evidence="9">
    <location>
        <begin position="484"/>
        <end position="491"/>
    </location>
</feature>
<feature type="strand" evidence="9">
    <location>
        <begin position="498"/>
        <end position="503"/>
    </location>
</feature>
<feature type="strand" evidence="9">
    <location>
        <begin position="508"/>
        <end position="514"/>
    </location>
</feature>
<feature type="helix" evidence="9">
    <location>
        <begin position="520"/>
        <end position="522"/>
    </location>
</feature>
<feature type="strand" evidence="9">
    <location>
        <begin position="524"/>
        <end position="527"/>
    </location>
</feature>
<feature type="helix" evidence="9">
    <location>
        <begin position="530"/>
        <end position="543"/>
    </location>
</feature>
<feature type="helix" evidence="9">
    <location>
        <begin position="556"/>
        <end position="569"/>
    </location>
</feature>
<feature type="helix" evidence="9">
    <location>
        <begin position="574"/>
        <end position="576"/>
    </location>
</feature>
<feature type="strand" evidence="9">
    <location>
        <begin position="579"/>
        <end position="586"/>
    </location>
</feature>
<feature type="strand" evidence="9">
    <location>
        <begin position="589"/>
        <end position="591"/>
    </location>
</feature>
<feature type="strand" evidence="9">
    <location>
        <begin position="593"/>
        <end position="602"/>
    </location>
</feature>
<feature type="helix" evidence="9">
    <location>
        <begin position="603"/>
        <end position="609"/>
    </location>
</feature>
<feature type="helix" evidence="9">
    <location>
        <begin position="610"/>
        <end position="612"/>
    </location>
</feature>
<feature type="helix" evidence="9">
    <location>
        <begin position="615"/>
        <end position="619"/>
    </location>
</feature>
<feature type="helix" evidence="9">
    <location>
        <begin position="628"/>
        <end position="631"/>
    </location>
</feature>
<feature type="turn" evidence="9">
    <location>
        <begin position="640"/>
        <end position="642"/>
    </location>
</feature>
<feature type="helix" evidence="9">
    <location>
        <begin position="651"/>
        <end position="657"/>
    </location>
</feature>
<feature type="helix" evidence="9">
    <location>
        <begin position="662"/>
        <end position="664"/>
    </location>
</feature>
<feature type="helix" evidence="9">
    <location>
        <begin position="668"/>
        <end position="686"/>
    </location>
</feature>
<feature type="turn" evidence="12">
    <location>
        <begin position="689"/>
        <end position="691"/>
    </location>
</feature>
<feature type="helix" evidence="9">
    <location>
        <begin position="703"/>
        <end position="716"/>
    </location>
</feature>
<feature type="helix" evidence="9">
    <location>
        <begin position="720"/>
        <end position="722"/>
    </location>
</feature>
<feature type="helix" evidence="9">
    <location>
        <begin position="723"/>
        <end position="727"/>
    </location>
</feature>
<feature type="strand" evidence="9">
    <location>
        <begin position="730"/>
        <end position="734"/>
    </location>
</feature>
<feature type="helix" evidence="12">
    <location>
        <begin position="735"/>
        <end position="738"/>
    </location>
</feature>
<feature type="helix" evidence="9">
    <location>
        <begin position="742"/>
        <end position="753"/>
    </location>
</feature>
<feature type="turn" evidence="9">
    <location>
        <begin position="757"/>
        <end position="759"/>
    </location>
</feature>
<feature type="helix" evidence="9">
    <location>
        <begin position="763"/>
        <end position="778"/>
    </location>
</feature>
<feature type="strand" evidence="9">
    <location>
        <begin position="786"/>
        <end position="788"/>
    </location>
</feature>
<feature type="turn" evidence="10">
    <location>
        <begin position="793"/>
        <end position="797"/>
    </location>
</feature>
<feature type="helix" evidence="9">
    <location>
        <begin position="798"/>
        <end position="817"/>
    </location>
</feature>
<feature type="helix" evidence="11">
    <location>
        <begin position="819"/>
        <end position="822"/>
    </location>
</feature>
<feature type="helix" evidence="12">
    <location>
        <begin position="833"/>
        <end position="835"/>
    </location>
</feature>
<feature type="helix" evidence="9">
    <location>
        <begin position="838"/>
        <end position="840"/>
    </location>
</feature>
<feature type="helix" evidence="9">
    <location>
        <begin position="841"/>
        <end position="849"/>
    </location>
</feature>
<feature type="helix" evidence="9">
    <location>
        <begin position="853"/>
        <end position="858"/>
    </location>
</feature>
<feature type="helix" evidence="9">
    <location>
        <begin position="862"/>
        <end position="868"/>
    </location>
</feature>
<feature type="helix" evidence="9">
    <location>
        <begin position="869"/>
        <end position="874"/>
    </location>
</feature>
<feature type="strand" evidence="12">
    <location>
        <begin position="876"/>
        <end position="879"/>
    </location>
</feature>
<accession>Q12386</accession>
<accession>D6W2J7</accession>
<name>ARP8_YEAST</name>
<dbReference type="EMBL" id="X94335">
    <property type="protein sequence ID" value="CAA64058.1"/>
    <property type="molecule type" value="Genomic_DNA"/>
</dbReference>
<dbReference type="EMBL" id="Z75049">
    <property type="protein sequence ID" value="CAA99341.1"/>
    <property type="molecule type" value="Genomic_DNA"/>
</dbReference>
<dbReference type="EMBL" id="BK006948">
    <property type="protein sequence ID" value="DAA10913.1"/>
    <property type="molecule type" value="Genomic_DNA"/>
</dbReference>
<dbReference type="PIR" id="S67026">
    <property type="entry name" value="S67026"/>
</dbReference>
<dbReference type="RefSeq" id="NP_014784.1">
    <property type="nucleotide sequence ID" value="NM_001183560.1"/>
</dbReference>
<dbReference type="PDB" id="4AM6">
    <property type="method" value="X-ray"/>
    <property type="resolution" value="2.70 A"/>
    <property type="chains" value="A/B=248-881"/>
</dbReference>
<dbReference type="PDB" id="4AM7">
    <property type="method" value="X-ray"/>
    <property type="resolution" value="3.25 A"/>
    <property type="chains" value="A/B=248-881"/>
</dbReference>
<dbReference type="PDB" id="5NBN">
    <property type="method" value="X-ray"/>
    <property type="resolution" value="4.00 A"/>
    <property type="chains" value="E/F=255-881"/>
</dbReference>
<dbReference type="PDB" id="8A5A">
    <property type="method" value="EM"/>
    <property type="resolution" value="3.30 A"/>
    <property type="chains" value="U=1-881"/>
</dbReference>
<dbReference type="PDB" id="8A5O">
    <property type="method" value="EM"/>
    <property type="resolution" value="3.20 A"/>
    <property type="chains" value="U=1-881"/>
</dbReference>
<dbReference type="PDBsum" id="4AM6"/>
<dbReference type="PDBsum" id="4AM7"/>
<dbReference type="PDBsum" id="5NBN"/>
<dbReference type="PDBsum" id="8A5A"/>
<dbReference type="PDBsum" id="8A5O"/>
<dbReference type="EMDB" id="EMD-15163"/>
<dbReference type="EMDB" id="EMD-15177"/>
<dbReference type="EMDB" id="EMD-15179"/>
<dbReference type="EMDB" id="EMD-15186"/>
<dbReference type="SMR" id="Q12386"/>
<dbReference type="BioGRID" id="34535">
    <property type="interactions" value="520"/>
</dbReference>
<dbReference type="ComplexPortal" id="CPX-863">
    <property type="entry name" value="INO80 chromatin remodeling complex"/>
</dbReference>
<dbReference type="DIP" id="DIP-6706N"/>
<dbReference type="FunCoup" id="Q12386">
    <property type="interactions" value="1045"/>
</dbReference>
<dbReference type="IntAct" id="Q12386">
    <property type="interactions" value="47"/>
</dbReference>
<dbReference type="MINT" id="Q12386"/>
<dbReference type="STRING" id="4932.YOR141C"/>
<dbReference type="iPTMnet" id="Q12386"/>
<dbReference type="PaxDb" id="4932-YOR141C"/>
<dbReference type="PeptideAtlas" id="Q12386"/>
<dbReference type="EnsemblFungi" id="YOR141C_mRNA">
    <property type="protein sequence ID" value="YOR141C"/>
    <property type="gene ID" value="YOR141C"/>
</dbReference>
<dbReference type="GeneID" id="854309"/>
<dbReference type="KEGG" id="sce:YOR141C"/>
<dbReference type="AGR" id="SGD:S000005667"/>
<dbReference type="SGD" id="S000005667">
    <property type="gene designation" value="ARP8"/>
</dbReference>
<dbReference type="VEuPathDB" id="FungiDB:YOR141C"/>
<dbReference type="eggNOG" id="KOG0797">
    <property type="taxonomic scope" value="Eukaryota"/>
</dbReference>
<dbReference type="GeneTree" id="ENSGT00390000001763"/>
<dbReference type="HOGENOM" id="CLU_006974_0_1_1"/>
<dbReference type="InParanoid" id="Q12386"/>
<dbReference type="OMA" id="AYKCMWA"/>
<dbReference type="OrthoDB" id="5572108at2759"/>
<dbReference type="BioCyc" id="YEAST:G3O-33662-MONOMER"/>
<dbReference type="BioGRID-ORCS" id="854309">
    <property type="hits" value="3 hits in 10 CRISPR screens"/>
</dbReference>
<dbReference type="EvolutionaryTrace" id="Q12386"/>
<dbReference type="PRO" id="PR:Q12386"/>
<dbReference type="Proteomes" id="UP000002311">
    <property type="component" value="Chromosome XV"/>
</dbReference>
<dbReference type="RNAct" id="Q12386">
    <property type="molecule type" value="protein"/>
</dbReference>
<dbReference type="GO" id="GO:0005737">
    <property type="term" value="C:cytoplasm"/>
    <property type="evidence" value="ECO:0007669"/>
    <property type="project" value="UniProtKB-KW"/>
</dbReference>
<dbReference type="GO" id="GO:0005856">
    <property type="term" value="C:cytoskeleton"/>
    <property type="evidence" value="ECO:0007669"/>
    <property type="project" value="UniProtKB-SubCell"/>
</dbReference>
<dbReference type="GO" id="GO:0031011">
    <property type="term" value="C:Ino80 complex"/>
    <property type="evidence" value="ECO:0000353"/>
    <property type="project" value="SGD"/>
</dbReference>
<dbReference type="GO" id="GO:0005634">
    <property type="term" value="C:nucleus"/>
    <property type="evidence" value="ECO:0000314"/>
    <property type="project" value="SGD"/>
</dbReference>
<dbReference type="GO" id="GO:0005524">
    <property type="term" value="F:ATP binding"/>
    <property type="evidence" value="ECO:0007669"/>
    <property type="project" value="UniProtKB-KW"/>
</dbReference>
<dbReference type="GO" id="GO:0003729">
    <property type="term" value="F:mRNA binding"/>
    <property type="evidence" value="ECO:0000314"/>
    <property type="project" value="SGD"/>
</dbReference>
<dbReference type="GO" id="GO:0006338">
    <property type="term" value="P:chromatin remodeling"/>
    <property type="evidence" value="ECO:0000314"/>
    <property type="project" value="ComplexPortal"/>
</dbReference>
<dbReference type="GO" id="GO:0006974">
    <property type="term" value="P:DNA damage response"/>
    <property type="evidence" value="ECO:0000315"/>
    <property type="project" value="SGD"/>
</dbReference>
<dbReference type="GO" id="GO:0006281">
    <property type="term" value="P:DNA repair"/>
    <property type="evidence" value="ECO:0000303"/>
    <property type="project" value="ComplexPortal"/>
</dbReference>
<dbReference type="GO" id="GO:0006302">
    <property type="term" value="P:double-strand break repair"/>
    <property type="evidence" value="ECO:0000315"/>
    <property type="project" value="SGD"/>
</dbReference>
<dbReference type="GO" id="GO:0006312">
    <property type="term" value="P:mitotic recombination"/>
    <property type="evidence" value="ECO:0000315"/>
    <property type="project" value="SGD"/>
</dbReference>
<dbReference type="GO" id="GO:0006355">
    <property type="term" value="P:regulation of DNA-templated transcription"/>
    <property type="evidence" value="ECO:0000318"/>
    <property type="project" value="GO_Central"/>
</dbReference>
<dbReference type="CDD" id="cd10206">
    <property type="entry name" value="ASKHA_NBD_Arp8-like"/>
    <property type="match status" value="1"/>
</dbReference>
<dbReference type="FunFam" id="3.30.420.580:FF:000002">
    <property type="entry name" value="Actin-related protein 8"/>
    <property type="match status" value="1"/>
</dbReference>
<dbReference type="Gene3D" id="3.30.420.40">
    <property type="match status" value="1"/>
</dbReference>
<dbReference type="Gene3D" id="3.30.420.580">
    <property type="match status" value="1"/>
</dbReference>
<dbReference type="Gene3D" id="3.90.640.10">
    <property type="entry name" value="Actin, Chain A, domain 4"/>
    <property type="match status" value="1"/>
</dbReference>
<dbReference type="InterPro" id="IPR004000">
    <property type="entry name" value="Actin"/>
</dbReference>
<dbReference type="InterPro" id="IPR043129">
    <property type="entry name" value="ATPase_NBD"/>
</dbReference>
<dbReference type="PANTHER" id="PTHR11937">
    <property type="entry name" value="ACTIN"/>
    <property type="match status" value="1"/>
</dbReference>
<dbReference type="Pfam" id="PF00022">
    <property type="entry name" value="Actin"/>
    <property type="match status" value="1"/>
</dbReference>
<dbReference type="SMART" id="SM00268">
    <property type="entry name" value="ACTIN"/>
    <property type="match status" value="1"/>
</dbReference>
<dbReference type="SUPFAM" id="SSF53067">
    <property type="entry name" value="Actin-like ATPase domain"/>
    <property type="match status" value="2"/>
</dbReference>
<organism>
    <name type="scientific">Saccharomyces cerevisiae (strain ATCC 204508 / S288c)</name>
    <name type="common">Baker's yeast</name>
    <dbReference type="NCBI Taxonomy" id="559292"/>
    <lineage>
        <taxon>Eukaryota</taxon>
        <taxon>Fungi</taxon>
        <taxon>Dikarya</taxon>
        <taxon>Ascomycota</taxon>
        <taxon>Saccharomycotina</taxon>
        <taxon>Saccharomycetes</taxon>
        <taxon>Saccharomycetales</taxon>
        <taxon>Saccharomycetaceae</taxon>
        <taxon>Saccharomyces</taxon>
    </lineage>
</organism>
<evidence type="ECO:0000250" key="1"/>
<evidence type="ECO:0000256" key="2">
    <source>
        <dbReference type="SAM" id="MobiDB-lite"/>
    </source>
</evidence>
<evidence type="ECO:0000269" key="3">
    <source>
    </source>
</evidence>
<evidence type="ECO:0000269" key="4">
    <source>
    </source>
</evidence>
<evidence type="ECO:0000305" key="5"/>
<evidence type="ECO:0007744" key="6">
    <source>
    </source>
</evidence>
<evidence type="ECO:0007744" key="7">
    <source>
    </source>
</evidence>
<evidence type="ECO:0007744" key="8">
    <source>
    </source>
</evidence>
<evidence type="ECO:0007829" key="9">
    <source>
        <dbReference type="PDB" id="4AM6"/>
    </source>
</evidence>
<evidence type="ECO:0007829" key="10">
    <source>
        <dbReference type="PDB" id="4AM7"/>
    </source>
</evidence>
<evidence type="ECO:0007829" key="11">
    <source>
        <dbReference type="PDB" id="8A5A"/>
    </source>
</evidence>
<evidence type="ECO:0007829" key="12">
    <source>
        <dbReference type="PDB" id="8A5O"/>
    </source>
</evidence>
<gene>
    <name type="primary">ARP8</name>
    <name type="ordered locus">YOR141C</name>
    <name type="ORF">YOR3348C</name>
</gene>
<comment type="function">
    <text evidence="4">Probably involved in transcription regulation via its interaction with the INO80 complex, a chromatin remodeling complex. Exhibits low basal ATPase activity, and unable to polymerize. Strongly prefer nucleosomes and H3-H4 tetramers over H2A-H2B dimers, suggesting it may act as a nucleosome recognition module within the complex.</text>
</comment>
<comment type="subunit">
    <text evidence="1">Component of the chromatin-remodeling INO80 complex, at least composed of ARP4, ARP5, ARP8, RVB1, RVB2, TAF14, NHP10, IES1, IES3, IES4, IES6, ACT1, IES2, IES5 and INO80. Exists as monomers and dimers, but the dimer is most probably the biologically relevant form required for stable interactions with histones that exploits the twofold symmetry of the nucleosome core (By similarity).</text>
</comment>
<comment type="interaction">
    <interactant intactId="EBI-2967">
        <id>Q12386</id>
    </interactant>
    <interactant intactId="EBI-367540">
        <id>P68135</id>
        <label>ACTA1</label>
    </interactant>
    <organismsDiffer>true</organismsDiffer>
    <experiments>2</experiments>
</comment>
<comment type="subcellular location">
    <subcellularLocation>
        <location>Nucleus</location>
    </subcellularLocation>
    <subcellularLocation>
        <location>Cytoplasm</location>
        <location>Cytoskeleton</location>
    </subcellularLocation>
</comment>
<comment type="miscellaneous">
    <text evidence="3">Present with 1010 molecules/cell in log phase SD medium.</text>
</comment>
<comment type="similarity">
    <text evidence="5">Belongs to the actin family.</text>
</comment>
<reference key="1">
    <citation type="journal article" date="1997" name="Yeast">
        <title>DNA sequencing and analysis of 130 kb from yeast chromosome XV.</title>
        <authorList>
            <person name="Voss H."/>
            <person name="Benes V."/>
            <person name="Andrade M.A."/>
            <person name="Valencia A."/>
            <person name="Rechmann S."/>
            <person name="Teodoru C."/>
            <person name="Schwager C."/>
            <person name="Paces V."/>
            <person name="Sander C."/>
            <person name="Ansorge W."/>
        </authorList>
    </citation>
    <scope>NUCLEOTIDE SEQUENCE [GENOMIC DNA]</scope>
</reference>
<reference key="2">
    <citation type="journal article" date="1997" name="Nature">
        <title>The nucleotide sequence of Saccharomyces cerevisiae chromosome XV.</title>
        <authorList>
            <person name="Dujon B."/>
            <person name="Albermann K."/>
            <person name="Aldea M."/>
            <person name="Alexandraki D."/>
            <person name="Ansorge W."/>
            <person name="Arino J."/>
            <person name="Benes V."/>
            <person name="Bohn C."/>
            <person name="Bolotin-Fukuhara M."/>
            <person name="Bordonne R."/>
            <person name="Boyer J."/>
            <person name="Camasses A."/>
            <person name="Casamayor A."/>
            <person name="Casas C."/>
            <person name="Cheret G."/>
            <person name="Cziepluch C."/>
            <person name="Daignan-Fornier B."/>
            <person name="Dang V.-D."/>
            <person name="de Haan M."/>
            <person name="Delius H."/>
            <person name="Durand P."/>
            <person name="Fairhead C."/>
            <person name="Feldmann H."/>
            <person name="Gaillon L."/>
            <person name="Galisson F."/>
            <person name="Gamo F.-J."/>
            <person name="Gancedo C."/>
            <person name="Goffeau A."/>
            <person name="Goulding S.E."/>
            <person name="Grivell L.A."/>
            <person name="Habbig B."/>
            <person name="Hand N.J."/>
            <person name="Hani J."/>
            <person name="Hattenhorst U."/>
            <person name="Hebling U."/>
            <person name="Hernando Y."/>
            <person name="Herrero E."/>
            <person name="Heumann K."/>
            <person name="Hiesel R."/>
            <person name="Hilger F."/>
            <person name="Hofmann B."/>
            <person name="Hollenberg C.P."/>
            <person name="Hughes B."/>
            <person name="Jauniaux J.-C."/>
            <person name="Kalogeropoulos A."/>
            <person name="Katsoulou C."/>
            <person name="Kordes E."/>
            <person name="Lafuente M.J."/>
            <person name="Landt O."/>
            <person name="Louis E.J."/>
            <person name="Maarse A.C."/>
            <person name="Madania A."/>
            <person name="Mannhaupt G."/>
            <person name="Marck C."/>
            <person name="Martin R.P."/>
            <person name="Mewes H.-W."/>
            <person name="Michaux G."/>
            <person name="Paces V."/>
            <person name="Parle-McDermott A.G."/>
            <person name="Pearson B.M."/>
            <person name="Perrin A."/>
            <person name="Pettersson B."/>
            <person name="Poch O."/>
            <person name="Pohl T.M."/>
            <person name="Poirey R."/>
            <person name="Portetelle D."/>
            <person name="Pujol A."/>
            <person name="Purnelle B."/>
            <person name="Ramezani Rad M."/>
            <person name="Rechmann S."/>
            <person name="Schwager C."/>
            <person name="Schweizer M."/>
            <person name="Sor F."/>
            <person name="Sterky F."/>
            <person name="Tarassov I.A."/>
            <person name="Teodoru C."/>
            <person name="Tettelin H."/>
            <person name="Thierry A."/>
            <person name="Tobiasch E."/>
            <person name="Tzermia M."/>
            <person name="Uhlen M."/>
            <person name="Unseld M."/>
            <person name="Valens M."/>
            <person name="Vandenbol M."/>
            <person name="Vetter I."/>
            <person name="Vlcek C."/>
            <person name="Voet M."/>
            <person name="Volckaert G."/>
            <person name="Voss H."/>
            <person name="Wambutt R."/>
            <person name="Wedler H."/>
            <person name="Wiemann S."/>
            <person name="Winsor B."/>
            <person name="Wolfe K.H."/>
            <person name="Zollner A."/>
            <person name="Zumstein E."/>
            <person name="Kleine K."/>
        </authorList>
    </citation>
    <scope>NUCLEOTIDE SEQUENCE [LARGE SCALE GENOMIC DNA]</scope>
    <source>
        <strain>ATCC 204508 / S288c</strain>
    </source>
</reference>
<reference key="3">
    <citation type="journal article" date="2014" name="G3 (Bethesda)">
        <title>The reference genome sequence of Saccharomyces cerevisiae: Then and now.</title>
        <authorList>
            <person name="Engel S.R."/>
            <person name="Dietrich F.S."/>
            <person name="Fisk D.G."/>
            <person name="Binkley G."/>
            <person name="Balakrishnan R."/>
            <person name="Costanzo M.C."/>
            <person name="Dwight S.S."/>
            <person name="Hitz B.C."/>
            <person name="Karra K."/>
            <person name="Nash R.S."/>
            <person name="Weng S."/>
            <person name="Wong E.D."/>
            <person name="Lloyd P."/>
            <person name="Skrzypek M.S."/>
            <person name="Miyasato S.R."/>
            <person name="Simison M."/>
            <person name="Cherry J.M."/>
        </authorList>
    </citation>
    <scope>GENOME REANNOTATION</scope>
    <source>
        <strain>ATCC 204508 / S288c</strain>
    </source>
</reference>
<reference key="4">
    <citation type="journal article" date="1997" name="Yeast">
        <title>Who's who among the Saccharomyces cerevisiae actin-related proteins? A classification and nomenclature proposal for a large family.</title>
        <authorList>
            <person name="Poch O."/>
            <person name="Winsor B."/>
        </authorList>
    </citation>
    <scope>GENE NAME</scope>
</reference>
<reference key="5">
    <citation type="journal article" date="2003" name="Mol. Cell">
        <title>Involvement of actin-related proteins in ATP-dependent chromatin remodeling.</title>
        <authorList>
            <person name="Shen X."/>
            <person name="Ranallo R."/>
            <person name="Choi E."/>
            <person name="Wu C."/>
        </authorList>
    </citation>
    <scope>IDENTIFICATION IN THE INO80 COMPLEX</scope>
    <scope>IDENTIFICATION BY MASS SPECTROMETRY</scope>
</reference>
<reference key="6">
    <citation type="journal article" date="2003" name="Nature">
        <title>Global analysis of protein expression in yeast.</title>
        <authorList>
            <person name="Ghaemmaghami S."/>
            <person name="Huh W.-K."/>
            <person name="Bower K."/>
            <person name="Howson R.W."/>
            <person name="Belle A."/>
            <person name="Dephoure N."/>
            <person name="O'Shea E.K."/>
            <person name="Weissman J.S."/>
        </authorList>
    </citation>
    <scope>LEVEL OF PROTEIN EXPRESSION [LARGE SCALE ANALYSIS]</scope>
</reference>
<reference key="7">
    <citation type="journal article" date="2007" name="J. Proteome Res.">
        <title>Large-scale phosphorylation analysis of alpha-factor-arrested Saccharomyces cerevisiae.</title>
        <authorList>
            <person name="Li X."/>
            <person name="Gerber S.A."/>
            <person name="Rudner A.D."/>
            <person name="Beausoleil S.A."/>
            <person name="Haas W."/>
            <person name="Villen J."/>
            <person name="Elias J.E."/>
            <person name="Gygi S.P."/>
        </authorList>
    </citation>
    <scope>PHOSPHORYLATION [LARGE SCALE ANALYSIS] AT SER-65</scope>
    <scope>IDENTIFICATION BY MASS SPECTROMETRY [LARGE SCALE ANALYSIS]</scope>
    <source>
        <strain>ADR376</strain>
    </source>
</reference>
<reference key="8">
    <citation type="journal article" date="2008" name="Mol. Cell. Proteomics">
        <title>A multidimensional chromatography technology for in-depth phosphoproteome analysis.</title>
        <authorList>
            <person name="Albuquerque C.P."/>
            <person name="Smolka M.B."/>
            <person name="Payne S.H."/>
            <person name="Bafna V."/>
            <person name="Eng J."/>
            <person name="Zhou H."/>
        </authorList>
    </citation>
    <scope>PHOSPHORYLATION [LARGE SCALE ANALYSIS] AT SER-65 AND SER-70</scope>
    <scope>IDENTIFICATION BY MASS SPECTROMETRY [LARGE SCALE ANALYSIS]</scope>
</reference>
<reference key="9">
    <citation type="journal article" date="2009" name="Science">
        <title>Global analysis of Cdk1 substrate phosphorylation sites provides insights into evolution.</title>
        <authorList>
            <person name="Holt L.J."/>
            <person name="Tuch B.B."/>
            <person name="Villen J."/>
            <person name="Johnson A.D."/>
            <person name="Gygi S.P."/>
            <person name="Morgan D.O."/>
        </authorList>
    </citation>
    <scope>PHOSPHORYLATION [LARGE SCALE ANALYSIS] AT SER-65</scope>
    <scope>IDENTIFICATION BY MASS SPECTROMETRY [LARGE SCALE ANALYSIS]</scope>
</reference>
<reference key="10">
    <citation type="journal article" date="2012" name="Proc. Natl. Acad. Sci. U.S.A.">
        <title>Interactions between the nucleosome histone core and Arp8 in the INO80 chromatin remodeling complex.</title>
        <authorList>
            <person name="Saravanan M."/>
            <person name="Wuerges J."/>
            <person name="Bose D."/>
            <person name="McCormack E.A."/>
            <person name="Cook N.J."/>
            <person name="Zhang X."/>
            <person name="Wigley D.B."/>
        </authorList>
    </citation>
    <scope>X-RAY CRYSTALLOGRAPHY (2.7 ANGSTROMS) OF 248-881</scope>
    <scope>ELECTRON MICROSCOPY</scope>
    <scope>FUNCTION</scope>
    <scope>SUBUNIT</scope>
</reference>